<accession>Q3B604</accession>
<reference key="1">
    <citation type="submission" date="2005-08" db="EMBL/GenBank/DDBJ databases">
        <title>Complete sequence of Pelodictyon luteolum DSM 273.</title>
        <authorList>
            <consortium name="US DOE Joint Genome Institute"/>
            <person name="Copeland A."/>
            <person name="Lucas S."/>
            <person name="Lapidus A."/>
            <person name="Barry K."/>
            <person name="Detter J.C."/>
            <person name="Glavina T."/>
            <person name="Hammon N."/>
            <person name="Israni S."/>
            <person name="Pitluck S."/>
            <person name="Bryant D."/>
            <person name="Schmutz J."/>
            <person name="Larimer F."/>
            <person name="Land M."/>
            <person name="Kyrpides N."/>
            <person name="Ivanova N."/>
            <person name="Richardson P."/>
        </authorList>
    </citation>
    <scope>NUCLEOTIDE SEQUENCE [LARGE SCALE GENOMIC DNA]</scope>
    <source>
        <strain>DSM 273 / BCRC 81028 / 2530</strain>
    </source>
</reference>
<dbReference type="EC" id="2.7.7.38" evidence="1"/>
<dbReference type="EMBL" id="CP000096">
    <property type="protein sequence ID" value="ABB23227.1"/>
    <property type="molecule type" value="Genomic_DNA"/>
</dbReference>
<dbReference type="RefSeq" id="WP_011357102.1">
    <property type="nucleotide sequence ID" value="NC_007512.1"/>
</dbReference>
<dbReference type="SMR" id="Q3B604"/>
<dbReference type="STRING" id="319225.Plut_0339"/>
<dbReference type="KEGG" id="plt:Plut_0339"/>
<dbReference type="eggNOG" id="COG1212">
    <property type="taxonomic scope" value="Bacteria"/>
</dbReference>
<dbReference type="HOGENOM" id="CLU_065038_0_1_10"/>
<dbReference type="OrthoDB" id="9815559at2"/>
<dbReference type="UniPathway" id="UPA00030"/>
<dbReference type="UniPathway" id="UPA00358">
    <property type="reaction ID" value="UER00476"/>
</dbReference>
<dbReference type="Proteomes" id="UP000002709">
    <property type="component" value="Chromosome"/>
</dbReference>
<dbReference type="GO" id="GO:0005829">
    <property type="term" value="C:cytosol"/>
    <property type="evidence" value="ECO:0007669"/>
    <property type="project" value="TreeGrafter"/>
</dbReference>
<dbReference type="GO" id="GO:0008690">
    <property type="term" value="F:3-deoxy-manno-octulosonate cytidylyltransferase activity"/>
    <property type="evidence" value="ECO:0007669"/>
    <property type="project" value="UniProtKB-UniRule"/>
</dbReference>
<dbReference type="GO" id="GO:0033468">
    <property type="term" value="P:CMP-keto-3-deoxy-D-manno-octulosonic acid biosynthetic process"/>
    <property type="evidence" value="ECO:0007669"/>
    <property type="project" value="UniProtKB-UniRule"/>
</dbReference>
<dbReference type="GO" id="GO:0009103">
    <property type="term" value="P:lipopolysaccharide biosynthetic process"/>
    <property type="evidence" value="ECO:0007669"/>
    <property type="project" value="UniProtKB-UniRule"/>
</dbReference>
<dbReference type="CDD" id="cd02517">
    <property type="entry name" value="CMP-KDO-Synthetase"/>
    <property type="match status" value="1"/>
</dbReference>
<dbReference type="Gene3D" id="3.90.550.10">
    <property type="entry name" value="Spore Coat Polysaccharide Biosynthesis Protein SpsA, Chain A"/>
    <property type="match status" value="1"/>
</dbReference>
<dbReference type="HAMAP" id="MF_00057">
    <property type="entry name" value="KdsB"/>
    <property type="match status" value="1"/>
</dbReference>
<dbReference type="InterPro" id="IPR003329">
    <property type="entry name" value="Cytidylyl_trans"/>
</dbReference>
<dbReference type="InterPro" id="IPR004528">
    <property type="entry name" value="KdsB"/>
</dbReference>
<dbReference type="InterPro" id="IPR029044">
    <property type="entry name" value="Nucleotide-diphossugar_trans"/>
</dbReference>
<dbReference type="NCBIfam" id="TIGR00466">
    <property type="entry name" value="kdsB"/>
    <property type="match status" value="1"/>
</dbReference>
<dbReference type="NCBIfam" id="NF003952">
    <property type="entry name" value="PRK05450.1-5"/>
    <property type="match status" value="1"/>
</dbReference>
<dbReference type="NCBIfam" id="NF009905">
    <property type="entry name" value="PRK13368.1"/>
    <property type="match status" value="1"/>
</dbReference>
<dbReference type="PANTHER" id="PTHR42866">
    <property type="entry name" value="3-DEOXY-MANNO-OCTULOSONATE CYTIDYLYLTRANSFERASE"/>
    <property type="match status" value="1"/>
</dbReference>
<dbReference type="PANTHER" id="PTHR42866:SF2">
    <property type="entry name" value="3-DEOXY-MANNO-OCTULOSONATE CYTIDYLYLTRANSFERASE, MITOCHONDRIAL"/>
    <property type="match status" value="1"/>
</dbReference>
<dbReference type="Pfam" id="PF02348">
    <property type="entry name" value="CTP_transf_3"/>
    <property type="match status" value="1"/>
</dbReference>
<dbReference type="SUPFAM" id="SSF53448">
    <property type="entry name" value="Nucleotide-diphospho-sugar transferases"/>
    <property type="match status" value="1"/>
</dbReference>
<comment type="function">
    <text evidence="1">Activates KDO (a required 8-carbon sugar) for incorporation into bacterial lipopolysaccharide in Gram-negative bacteria.</text>
</comment>
<comment type="catalytic activity">
    <reaction evidence="1">
        <text>3-deoxy-alpha-D-manno-oct-2-ulosonate + CTP = CMP-3-deoxy-beta-D-manno-octulosonate + diphosphate</text>
        <dbReference type="Rhea" id="RHEA:23448"/>
        <dbReference type="ChEBI" id="CHEBI:33019"/>
        <dbReference type="ChEBI" id="CHEBI:37563"/>
        <dbReference type="ChEBI" id="CHEBI:85986"/>
        <dbReference type="ChEBI" id="CHEBI:85987"/>
        <dbReference type="EC" id="2.7.7.38"/>
    </reaction>
</comment>
<comment type="pathway">
    <text evidence="1">Nucleotide-sugar biosynthesis; CMP-3-deoxy-D-manno-octulosonate biosynthesis; CMP-3-deoxy-D-manno-octulosonate from 3-deoxy-D-manno-octulosonate and CTP: step 1/1.</text>
</comment>
<comment type="pathway">
    <text evidence="1">Bacterial outer membrane biogenesis; lipopolysaccharide biosynthesis.</text>
</comment>
<comment type="subcellular location">
    <subcellularLocation>
        <location evidence="1">Cytoplasm</location>
    </subcellularLocation>
</comment>
<comment type="similarity">
    <text evidence="1">Belongs to the KdsB family.</text>
</comment>
<name>KDSB_CHLL3</name>
<proteinExistence type="inferred from homology"/>
<gene>
    <name evidence="1" type="primary">kdsB</name>
    <name type="ordered locus">Plut_0339</name>
</gene>
<keyword id="KW-0963">Cytoplasm</keyword>
<keyword id="KW-0448">Lipopolysaccharide biosynthesis</keyword>
<keyword id="KW-0548">Nucleotidyltransferase</keyword>
<keyword id="KW-1185">Reference proteome</keyword>
<keyword id="KW-0808">Transferase</keyword>
<protein>
    <recommendedName>
        <fullName evidence="1">3-deoxy-manno-octulosonate cytidylyltransferase</fullName>
        <ecNumber evidence="1">2.7.7.38</ecNumber>
    </recommendedName>
    <alternativeName>
        <fullName evidence="1">CMP-2-keto-3-deoxyoctulosonic acid synthase</fullName>
        <shortName evidence="1">CKS</shortName>
        <shortName evidence="1">CMP-KDO synthase</shortName>
    </alternativeName>
</protein>
<feature type="chain" id="PRO_1000116891" description="3-deoxy-manno-octulosonate cytidylyltransferase">
    <location>
        <begin position="1"/>
        <end position="251"/>
    </location>
</feature>
<evidence type="ECO:0000255" key="1">
    <source>
        <dbReference type="HAMAP-Rule" id="MF_00057"/>
    </source>
</evidence>
<sequence length="251" mass="27414">MNAVILIPARLDSSRLPRKMLADLEGEPLIVRTWRQALRSNLASRVVVAADSPEIAAVLEPLGAEVVLTSPTASCGTERIAEAARSIEADVFLNLQGDEPLISPENIDLALQPFFDAPAGSALPDCTTLVFPLGPDDRTQIDDPHVVKVVMDGEGNALYFSRSPIPYVRNSSPSLRLYRHVGLYAFTAEVLQRFAAMPVSMLEEAESLEQLRLLESGFRIRCVNTAVDNPGVNTPEDLELVRSLLRRASRA</sequence>
<organism>
    <name type="scientific">Chlorobium luteolum (strain DSM 273 / BCRC 81028 / 2530)</name>
    <name type="common">Pelodictyon luteolum</name>
    <dbReference type="NCBI Taxonomy" id="319225"/>
    <lineage>
        <taxon>Bacteria</taxon>
        <taxon>Pseudomonadati</taxon>
        <taxon>Chlorobiota</taxon>
        <taxon>Chlorobiia</taxon>
        <taxon>Chlorobiales</taxon>
        <taxon>Chlorobiaceae</taxon>
        <taxon>Chlorobium/Pelodictyon group</taxon>
        <taxon>Pelodictyon</taxon>
    </lineage>
</organism>